<proteinExistence type="inferred from homology"/>
<dbReference type="EC" id="2.1.2.1" evidence="1"/>
<dbReference type="EMBL" id="FM204883">
    <property type="protein sequence ID" value="CAW93858.1"/>
    <property type="molecule type" value="Genomic_DNA"/>
</dbReference>
<dbReference type="RefSeq" id="WP_012679557.1">
    <property type="nucleotide sequence ID" value="NC_012471.1"/>
</dbReference>
<dbReference type="SMR" id="C0M6L7"/>
<dbReference type="KEGG" id="seu:SEQ_1165"/>
<dbReference type="HOGENOM" id="CLU_022477_2_1_9"/>
<dbReference type="OrthoDB" id="9803846at2"/>
<dbReference type="UniPathway" id="UPA00193"/>
<dbReference type="UniPathway" id="UPA00288">
    <property type="reaction ID" value="UER01023"/>
</dbReference>
<dbReference type="Proteomes" id="UP000001365">
    <property type="component" value="Chromosome"/>
</dbReference>
<dbReference type="GO" id="GO:0005829">
    <property type="term" value="C:cytosol"/>
    <property type="evidence" value="ECO:0007669"/>
    <property type="project" value="TreeGrafter"/>
</dbReference>
<dbReference type="GO" id="GO:0004372">
    <property type="term" value="F:glycine hydroxymethyltransferase activity"/>
    <property type="evidence" value="ECO:0007669"/>
    <property type="project" value="UniProtKB-UniRule"/>
</dbReference>
<dbReference type="GO" id="GO:0030170">
    <property type="term" value="F:pyridoxal phosphate binding"/>
    <property type="evidence" value="ECO:0007669"/>
    <property type="project" value="UniProtKB-UniRule"/>
</dbReference>
<dbReference type="GO" id="GO:0019264">
    <property type="term" value="P:glycine biosynthetic process from serine"/>
    <property type="evidence" value="ECO:0007669"/>
    <property type="project" value="UniProtKB-UniRule"/>
</dbReference>
<dbReference type="GO" id="GO:0035999">
    <property type="term" value="P:tetrahydrofolate interconversion"/>
    <property type="evidence" value="ECO:0007669"/>
    <property type="project" value="UniProtKB-UniRule"/>
</dbReference>
<dbReference type="CDD" id="cd00378">
    <property type="entry name" value="SHMT"/>
    <property type="match status" value="1"/>
</dbReference>
<dbReference type="FunFam" id="3.40.640.10:FF:000001">
    <property type="entry name" value="Serine hydroxymethyltransferase"/>
    <property type="match status" value="1"/>
</dbReference>
<dbReference type="Gene3D" id="3.90.1150.10">
    <property type="entry name" value="Aspartate Aminotransferase, domain 1"/>
    <property type="match status" value="1"/>
</dbReference>
<dbReference type="Gene3D" id="3.40.640.10">
    <property type="entry name" value="Type I PLP-dependent aspartate aminotransferase-like (Major domain)"/>
    <property type="match status" value="1"/>
</dbReference>
<dbReference type="HAMAP" id="MF_00051">
    <property type="entry name" value="SHMT"/>
    <property type="match status" value="1"/>
</dbReference>
<dbReference type="InterPro" id="IPR015424">
    <property type="entry name" value="PyrdxlP-dep_Trfase"/>
</dbReference>
<dbReference type="InterPro" id="IPR015421">
    <property type="entry name" value="PyrdxlP-dep_Trfase_major"/>
</dbReference>
<dbReference type="InterPro" id="IPR015422">
    <property type="entry name" value="PyrdxlP-dep_Trfase_small"/>
</dbReference>
<dbReference type="InterPro" id="IPR001085">
    <property type="entry name" value="Ser_HO-MeTrfase"/>
</dbReference>
<dbReference type="InterPro" id="IPR049943">
    <property type="entry name" value="Ser_HO-MeTrfase-like"/>
</dbReference>
<dbReference type="InterPro" id="IPR019798">
    <property type="entry name" value="Ser_HO-MeTrfase_PLP_BS"/>
</dbReference>
<dbReference type="InterPro" id="IPR039429">
    <property type="entry name" value="SHMT-like_dom"/>
</dbReference>
<dbReference type="NCBIfam" id="NF000586">
    <property type="entry name" value="PRK00011.1"/>
    <property type="match status" value="1"/>
</dbReference>
<dbReference type="PANTHER" id="PTHR11680">
    <property type="entry name" value="SERINE HYDROXYMETHYLTRANSFERASE"/>
    <property type="match status" value="1"/>
</dbReference>
<dbReference type="PANTHER" id="PTHR11680:SF35">
    <property type="entry name" value="SERINE HYDROXYMETHYLTRANSFERASE 1"/>
    <property type="match status" value="1"/>
</dbReference>
<dbReference type="Pfam" id="PF00464">
    <property type="entry name" value="SHMT"/>
    <property type="match status" value="1"/>
</dbReference>
<dbReference type="PIRSF" id="PIRSF000412">
    <property type="entry name" value="SHMT"/>
    <property type="match status" value="1"/>
</dbReference>
<dbReference type="SUPFAM" id="SSF53383">
    <property type="entry name" value="PLP-dependent transferases"/>
    <property type="match status" value="1"/>
</dbReference>
<dbReference type="PROSITE" id="PS00096">
    <property type="entry name" value="SHMT"/>
    <property type="match status" value="1"/>
</dbReference>
<evidence type="ECO:0000255" key="1">
    <source>
        <dbReference type="HAMAP-Rule" id="MF_00051"/>
    </source>
</evidence>
<gene>
    <name evidence="1" type="primary">glyA</name>
    <name type="ordered locus">SEQ_1165</name>
</gene>
<name>GLYA_STRE4</name>
<keyword id="KW-0028">Amino-acid biosynthesis</keyword>
<keyword id="KW-0963">Cytoplasm</keyword>
<keyword id="KW-0554">One-carbon metabolism</keyword>
<keyword id="KW-0663">Pyridoxal phosphate</keyword>
<keyword id="KW-0808">Transferase</keyword>
<accession>C0M6L7</accession>
<feature type="chain" id="PRO_1000117649" description="Serine hydroxymethyltransferase">
    <location>
        <begin position="1"/>
        <end position="419"/>
    </location>
</feature>
<feature type="binding site" evidence="1">
    <location>
        <position position="121"/>
    </location>
    <ligand>
        <name>(6S)-5,6,7,8-tetrahydrofolate</name>
        <dbReference type="ChEBI" id="CHEBI:57453"/>
    </ligand>
</feature>
<feature type="binding site" evidence="1">
    <location>
        <begin position="125"/>
        <end position="127"/>
    </location>
    <ligand>
        <name>(6S)-5,6,7,8-tetrahydrofolate</name>
        <dbReference type="ChEBI" id="CHEBI:57453"/>
    </ligand>
</feature>
<feature type="binding site" evidence="1">
    <location>
        <begin position="355"/>
        <end position="357"/>
    </location>
    <ligand>
        <name>(6S)-5,6,7,8-tetrahydrofolate</name>
        <dbReference type="ChEBI" id="CHEBI:57453"/>
    </ligand>
</feature>
<feature type="site" description="Plays an important role in substrate specificity" evidence="1">
    <location>
        <position position="229"/>
    </location>
</feature>
<feature type="modified residue" description="N6-(pyridoxal phosphate)lysine" evidence="1">
    <location>
        <position position="230"/>
    </location>
</feature>
<protein>
    <recommendedName>
        <fullName evidence="1">Serine hydroxymethyltransferase</fullName>
        <shortName evidence="1">SHMT</shortName>
        <shortName evidence="1">Serine methylase</shortName>
        <ecNumber evidence="1">2.1.2.1</ecNumber>
    </recommendedName>
</protein>
<sequence>MMFNNENYKDYDQELWEAIQAEEDRQEHNIELIASENMVSKAVMQAQGSVLTNKYAEGYPSKRYYGGTEYVDIVESLAIERAKKLFGAAYANVQPHSGSQANAAAYMALINAGDTVLGMDLAAGGHLTHGSPVNFSGKTYQFVGYTVDKETEKLDYAAILKQAKAVQPKLIVAGASAYSRQIDFEQFRFIADQVGSYLMVDMAHIAGLVAAGLHQNPVPYAHIVTSTTHKTLRGPRGGLLLTNDEAISRKMNAAIFPGLQGGPLEHVIAAKAVAFKEALDPAFTDYARAVIANTAAMAEVFAKDDRFRLISGGTDNHLFLVDVTKVIENGKLAQALLDEVNITLNKNAIPFETLSPFKTSGIRIGCAAITSRGMGVDESRTIAHLIIKALVNHQQPEILEEVRYEVRRLTDAFPLYKKN</sequence>
<reference key="1">
    <citation type="journal article" date="2009" name="PLoS Pathog.">
        <title>Genomic evidence for the evolution of Streptococcus equi: host restriction, increased virulence, and genetic exchange with human pathogens.</title>
        <authorList>
            <person name="Holden M.T.G."/>
            <person name="Heather Z."/>
            <person name="Paillot R."/>
            <person name="Steward K.F."/>
            <person name="Webb K."/>
            <person name="Ainslie F."/>
            <person name="Jourdan T."/>
            <person name="Bason N.C."/>
            <person name="Holroyd N.E."/>
            <person name="Mungall K."/>
            <person name="Quail M.A."/>
            <person name="Sanders M."/>
            <person name="Simmonds M."/>
            <person name="Willey D."/>
            <person name="Brooks K."/>
            <person name="Aanensen D.M."/>
            <person name="Spratt B.G."/>
            <person name="Jolley K.A."/>
            <person name="Maiden M.C.J."/>
            <person name="Kehoe M."/>
            <person name="Chanter N."/>
            <person name="Bentley S.D."/>
            <person name="Robinson C."/>
            <person name="Maskell D.J."/>
            <person name="Parkhill J."/>
            <person name="Waller A.S."/>
        </authorList>
    </citation>
    <scope>NUCLEOTIDE SEQUENCE [LARGE SCALE GENOMIC DNA]</scope>
    <source>
        <strain>4047</strain>
    </source>
</reference>
<comment type="function">
    <text evidence="1">Catalyzes the reversible interconversion of serine and glycine with tetrahydrofolate (THF) serving as the one-carbon carrier. This reaction serves as the major source of one-carbon groups required for the biosynthesis of purines, thymidylate, methionine, and other important biomolecules. Also exhibits THF-independent aldolase activity toward beta-hydroxyamino acids, producing glycine and aldehydes, via a retro-aldol mechanism.</text>
</comment>
<comment type="catalytic activity">
    <reaction evidence="1">
        <text>(6R)-5,10-methylene-5,6,7,8-tetrahydrofolate + glycine + H2O = (6S)-5,6,7,8-tetrahydrofolate + L-serine</text>
        <dbReference type="Rhea" id="RHEA:15481"/>
        <dbReference type="ChEBI" id="CHEBI:15377"/>
        <dbReference type="ChEBI" id="CHEBI:15636"/>
        <dbReference type="ChEBI" id="CHEBI:33384"/>
        <dbReference type="ChEBI" id="CHEBI:57305"/>
        <dbReference type="ChEBI" id="CHEBI:57453"/>
        <dbReference type="EC" id="2.1.2.1"/>
    </reaction>
</comment>
<comment type="cofactor">
    <cofactor evidence="1">
        <name>pyridoxal 5'-phosphate</name>
        <dbReference type="ChEBI" id="CHEBI:597326"/>
    </cofactor>
</comment>
<comment type="pathway">
    <text evidence="1">One-carbon metabolism; tetrahydrofolate interconversion.</text>
</comment>
<comment type="pathway">
    <text evidence="1">Amino-acid biosynthesis; glycine biosynthesis; glycine from L-serine: step 1/1.</text>
</comment>
<comment type="subunit">
    <text evidence="1">Homodimer.</text>
</comment>
<comment type="subcellular location">
    <subcellularLocation>
        <location evidence="1">Cytoplasm</location>
    </subcellularLocation>
</comment>
<comment type="similarity">
    <text evidence="1">Belongs to the SHMT family.</text>
</comment>
<organism>
    <name type="scientific">Streptococcus equi subsp. equi (strain 4047)</name>
    <dbReference type="NCBI Taxonomy" id="553482"/>
    <lineage>
        <taxon>Bacteria</taxon>
        <taxon>Bacillati</taxon>
        <taxon>Bacillota</taxon>
        <taxon>Bacilli</taxon>
        <taxon>Lactobacillales</taxon>
        <taxon>Streptococcaceae</taxon>
        <taxon>Streptococcus</taxon>
    </lineage>
</organism>